<keyword id="KW-1185">Reference proteome</keyword>
<keyword id="KW-0687">Ribonucleoprotein</keyword>
<keyword id="KW-0689">Ribosomal protein</keyword>
<keyword id="KW-0694">RNA-binding</keyword>
<keyword id="KW-0699">rRNA-binding</keyword>
<keyword id="KW-0820">tRNA-binding</keyword>
<gene>
    <name evidence="1" type="primary">rpsM</name>
    <name type="ordered locus">Atu1925</name>
    <name type="ORF">AGR_C_3520</name>
</gene>
<evidence type="ECO:0000255" key="1">
    <source>
        <dbReference type="HAMAP-Rule" id="MF_01315"/>
    </source>
</evidence>
<evidence type="ECO:0000256" key="2">
    <source>
        <dbReference type="SAM" id="MobiDB-lite"/>
    </source>
</evidence>
<evidence type="ECO:0000305" key="3"/>
<accession>Q8UE39</accession>
<feature type="chain" id="PRO_0000132058" description="Small ribosomal subunit protein uS13">
    <location>
        <begin position="1"/>
        <end position="122"/>
    </location>
</feature>
<feature type="region of interest" description="Disordered" evidence="2">
    <location>
        <begin position="99"/>
        <end position="122"/>
    </location>
</feature>
<dbReference type="EMBL" id="AE007869">
    <property type="protein sequence ID" value="AAK87686.2"/>
    <property type="molecule type" value="Genomic_DNA"/>
</dbReference>
<dbReference type="PIR" id="AC2813">
    <property type="entry name" value="AC2813"/>
</dbReference>
<dbReference type="PIR" id="E97591">
    <property type="entry name" value="E97591"/>
</dbReference>
<dbReference type="RefSeq" id="NP_354901.2">
    <property type="nucleotide sequence ID" value="NC_003062.2"/>
</dbReference>
<dbReference type="RefSeq" id="WP_006313984.1">
    <property type="nucleotide sequence ID" value="NC_003062.2"/>
</dbReference>
<dbReference type="SMR" id="Q8UE39"/>
<dbReference type="STRING" id="176299.Atu1925"/>
<dbReference type="EnsemblBacteria" id="AAK87686">
    <property type="protein sequence ID" value="AAK87686"/>
    <property type="gene ID" value="Atu1925"/>
</dbReference>
<dbReference type="GeneID" id="1133963"/>
<dbReference type="KEGG" id="atu:Atu1925"/>
<dbReference type="PATRIC" id="fig|176299.10.peg.1936"/>
<dbReference type="eggNOG" id="COG0099">
    <property type="taxonomic scope" value="Bacteria"/>
</dbReference>
<dbReference type="HOGENOM" id="CLU_103849_1_2_5"/>
<dbReference type="OrthoDB" id="9803610at2"/>
<dbReference type="PhylomeDB" id="Q8UE39"/>
<dbReference type="BioCyc" id="AGRO:ATU1925-MONOMER"/>
<dbReference type="Proteomes" id="UP000000813">
    <property type="component" value="Chromosome circular"/>
</dbReference>
<dbReference type="GO" id="GO:0005829">
    <property type="term" value="C:cytosol"/>
    <property type="evidence" value="ECO:0007669"/>
    <property type="project" value="TreeGrafter"/>
</dbReference>
<dbReference type="GO" id="GO:0015935">
    <property type="term" value="C:small ribosomal subunit"/>
    <property type="evidence" value="ECO:0007669"/>
    <property type="project" value="TreeGrafter"/>
</dbReference>
<dbReference type="GO" id="GO:0019843">
    <property type="term" value="F:rRNA binding"/>
    <property type="evidence" value="ECO:0007669"/>
    <property type="project" value="UniProtKB-UniRule"/>
</dbReference>
<dbReference type="GO" id="GO:0003735">
    <property type="term" value="F:structural constituent of ribosome"/>
    <property type="evidence" value="ECO:0007669"/>
    <property type="project" value="InterPro"/>
</dbReference>
<dbReference type="GO" id="GO:0000049">
    <property type="term" value="F:tRNA binding"/>
    <property type="evidence" value="ECO:0007669"/>
    <property type="project" value="UniProtKB-UniRule"/>
</dbReference>
<dbReference type="GO" id="GO:0006412">
    <property type="term" value="P:translation"/>
    <property type="evidence" value="ECO:0007669"/>
    <property type="project" value="UniProtKB-UniRule"/>
</dbReference>
<dbReference type="FunFam" id="1.10.8.50:FF:000001">
    <property type="entry name" value="30S ribosomal protein S13"/>
    <property type="match status" value="1"/>
</dbReference>
<dbReference type="FunFam" id="4.10.910.10:FF:000001">
    <property type="entry name" value="30S ribosomal protein S13"/>
    <property type="match status" value="1"/>
</dbReference>
<dbReference type="Gene3D" id="1.10.8.50">
    <property type="match status" value="1"/>
</dbReference>
<dbReference type="Gene3D" id="4.10.910.10">
    <property type="entry name" value="30s ribosomal protein s13, domain 2"/>
    <property type="match status" value="1"/>
</dbReference>
<dbReference type="HAMAP" id="MF_01315">
    <property type="entry name" value="Ribosomal_uS13"/>
    <property type="match status" value="1"/>
</dbReference>
<dbReference type="InterPro" id="IPR027437">
    <property type="entry name" value="Rbsml_uS13_C"/>
</dbReference>
<dbReference type="InterPro" id="IPR001892">
    <property type="entry name" value="Ribosomal_uS13"/>
</dbReference>
<dbReference type="InterPro" id="IPR010979">
    <property type="entry name" value="Ribosomal_uS13-like_H2TH"/>
</dbReference>
<dbReference type="InterPro" id="IPR019980">
    <property type="entry name" value="Ribosomal_uS13_bac-type"/>
</dbReference>
<dbReference type="InterPro" id="IPR018269">
    <property type="entry name" value="Ribosomal_uS13_CS"/>
</dbReference>
<dbReference type="NCBIfam" id="TIGR03631">
    <property type="entry name" value="uS13_bact"/>
    <property type="match status" value="1"/>
</dbReference>
<dbReference type="PANTHER" id="PTHR10871">
    <property type="entry name" value="30S RIBOSOMAL PROTEIN S13/40S RIBOSOMAL PROTEIN S18"/>
    <property type="match status" value="1"/>
</dbReference>
<dbReference type="PANTHER" id="PTHR10871:SF1">
    <property type="entry name" value="SMALL RIBOSOMAL SUBUNIT PROTEIN US13M"/>
    <property type="match status" value="1"/>
</dbReference>
<dbReference type="Pfam" id="PF00416">
    <property type="entry name" value="Ribosomal_S13"/>
    <property type="match status" value="1"/>
</dbReference>
<dbReference type="PIRSF" id="PIRSF002134">
    <property type="entry name" value="Ribosomal_S13"/>
    <property type="match status" value="1"/>
</dbReference>
<dbReference type="SUPFAM" id="SSF46946">
    <property type="entry name" value="S13-like H2TH domain"/>
    <property type="match status" value="1"/>
</dbReference>
<dbReference type="PROSITE" id="PS00646">
    <property type="entry name" value="RIBOSOMAL_S13_1"/>
    <property type="match status" value="1"/>
</dbReference>
<dbReference type="PROSITE" id="PS50159">
    <property type="entry name" value="RIBOSOMAL_S13_2"/>
    <property type="match status" value="1"/>
</dbReference>
<organism>
    <name type="scientific">Agrobacterium fabrum (strain C58 / ATCC 33970)</name>
    <name type="common">Agrobacterium tumefaciens (strain C58)</name>
    <dbReference type="NCBI Taxonomy" id="176299"/>
    <lineage>
        <taxon>Bacteria</taxon>
        <taxon>Pseudomonadati</taxon>
        <taxon>Pseudomonadota</taxon>
        <taxon>Alphaproteobacteria</taxon>
        <taxon>Hyphomicrobiales</taxon>
        <taxon>Rhizobiaceae</taxon>
        <taxon>Rhizobium/Agrobacterium group</taxon>
        <taxon>Agrobacterium</taxon>
        <taxon>Agrobacterium tumefaciens complex</taxon>
    </lineage>
</organism>
<comment type="function">
    <text evidence="1">Located at the top of the head of the 30S subunit, it contacts several helices of the 16S rRNA. In the 70S ribosome it contacts the 23S rRNA (bridge B1a) and protein L5 of the 50S subunit (bridge B1b), connecting the 2 subunits; these bridges are implicated in subunit movement. Contacts the tRNAs in the A and P-sites.</text>
</comment>
<comment type="subunit">
    <text evidence="1">Part of the 30S ribosomal subunit. Forms a loose heterodimer with protein S19. Forms two bridges to the 50S subunit in the 70S ribosome.</text>
</comment>
<comment type="similarity">
    <text evidence="1">Belongs to the universal ribosomal protein uS13 family.</text>
</comment>
<name>RS13_AGRFC</name>
<protein>
    <recommendedName>
        <fullName evidence="1">Small ribosomal subunit protein uS13</fullName>
    </recommendedName>
    <alternativeName>
        <fullName evidence="3">30S ribosomal protein S13</fullName>
    </alternativeName>
</protein>
<sequence>MARIAGVNIPTAKRVVIALTYIHGIGPKFAQEIMDKVGIPAEKRVHQLTDAEVLQIREAIDRDYQVEGDLRRETSMNIKRLMDLGCYRGLRHRRGLPVRGQRTHTNARTRKGPAKAIAGKKK</sequence>
<reference key="1">
    <citation type="journal article" date="2001" name="Science">
        <title>The genome of the natural genetic engineer Agrobacterium tumefaciens C58.</title>
        <authorList>
            <person name="Wood D.W."/>
            <person name="Setubal J.C."/>
            <person name="Kaul R."/>
            <person name="Monks D.E."/>
            <person name="Kitajima J.P."/>
            <person name="Okura V.K."/>
            <person name="Zhou Y."/>
            <person name="Chen L."/>
            <person name="Wood G.E."/>
            <person name="Almeida N.F. Jr."/>
            <person name="Woo L."/>
            <person name="Chen Y."/>
            <person name="Paulsen I.T."/>
            <person name="Eisen J.A."/>
            <person name="Karp P.D."/>
            <person name="Bovee D. Sr."/>
            <person name="Chapman P."/>
            <person name="Clendenning J."/>
            <person name="Deatherage G."/>
            <person name="Gillet W."/>
            <person name="Grant C."/>
            <person name="Kutyavin T."/>
            <person name="Levy R."/>
            <person name="Li M.-J."/>
            <person name="McClelland E."/>
            <person name="Palmieri A."/>
            <person name="Raymond C."/>
            <person name="Rouse G."/>
            <person name="Saenphimmachak C."/>
            <person name="Wu Z."/>
            <person name="Romero P."/>
            <person name="Gordon D."/>
            <person name="Zhang S."/>
            <person name="Yoo H."/>
            <person name="Tao Y."/>
            <person name="Biddle P."/>
            <person name="Jung M."/>
            <person name="Krespan W."/>
            <person name="Perry M."/>
            <person name="Gordon-Kamm B."/>
            <person name="Liao L."/>
            <person name="Kim S."/>
            <person name="Hendrick C."/>
            <person name="Zhao Z.-Y."/>
            <person name="Dolan M."/>
            <person name="Chumley F."/>
            <person name="Tingey S.V."/>
            <person name="Tomb J.-F."/>
            <person name="Gordon M.P."/>
            <person name="Olson M.V."/>
            <person name="Nester E.W."/>
        </authorList>
    </citation>
    <scope>NUCLEOTIDE SEQUENCE [LARGE SCALE GENOMIC DNA]</scope>
    <source>
        <strain>C58 / ATCC 33970</strain>
    </source>
</reference>
<reference key="2">
    <citation type="journal article" date="2001" name="Science">
        <title>Genome sequence of the plant pathogen and biotechnology agent Agrobacterium tumefaciens C58.</title>
        <authorList>
            <person name="Goodner B."/>
            <person name="Hinkle G."/>
            <person name="Gattung S."/>
            <person name="Miller N."/>
            <person name="Blanchard M."/>
            <person name="Qurollo B."/>
            <person name="Goldman B.S."/>
            <person name="Cao Y."/>
            <person name="Askenazi M."/>
            <person name="Halling C."/>
            <person name="Mullin L."/>
            <person name="Houmiel K."/>
            <person name="Gordon J."/>
            <person name="Vaudin M."/>
            <person name="Iartchouk O."/>
            <person name="Epp A."/>
            <person name="Liu F."/>
            <person name="Wollam C."/>
            <person name="Allinger M."/>
            <person name="Doughty D."/>
            <person name="Scott C."/>
            <person name="Lappas C."/>
            <person name="Markelz B."/>
            <person name="Flanagan C."/>
            <person name="Crowell C."/>
            <person name="Gurson J."/>
            <person name="Lomo C."/>
            <person name="Sear C."/>
            <person name="Strub G."/>
            <person name="Cielo C."/>
            <person name="Slater S."/>
        </authorList>
    </citation>
    <scope>NUCLEOTIDE SEQUENCE [LARGE SCALE GENOMIC DNA]</scope>
    <source>
        <strain>C58 / ATCC 33970</strain>
    </source>
</reference>
<proteinExistence type="inferred from homology"/>